<proteinExistence type="evidence at transcript level"/>
<name>RALB_MACFA</name>
<reference key="1">
    <citation type="submission" date="2005-06" db="EMBL/GenBank/DDBJ databases">
        <title>DNA sequences of macaque genes expressed in brain or testis and its evolutionary implications.</title>
        <authorList>
            <consortium name="International consortium for macaque cDNA sequencing and analysis"/>
        </authorList>
    </citation>
    <scope>NUCLEOTIDE SEQUENCE [LARGE SCALE MRNA]</scope>
    <source>
        <tissue>Testis</tissue>
    </source>
</reference>
<keyword id="KW-0053">Apoptosis</keyword>
<keyword id="KW-0131">Cell cycle</keyword>
<keyword id="KW-0132">Cell division</keyword>
<keyword id="KW-1003">Cell membrane</keyword>
<keyword id="KW-0342">GTP-binding</keyword>
<keyword id="KW-0378">Hydrolase</keyword>
<keyword id="KW-0449">Lipoprotein</keyword>
<keyword id="KW-0472">Membrane</keyword>
<keyword id="KW-0488">Methylation</keyword>
<keyword id="KW-0547">Nucleotide-binding</keyword>
<keyword id="KW-0636">Prenylation</keyword>
<keyword id="KW-1185">Reference proteome</keyword>
<comment type="function">
    <text evidence="2 3">Multifunctional GTPase involved in a variety of cellular processes including gene expression, cell migration, cell proliferation, oncogenic transformation and membrane trafficking. Accomplishes its multiple functions by interacting with distinct downstream effectors. Acts as a GTP sensor for GTP-dependent exocytosis of dense core vesicles (By similarity). Required both to stabilize the assembly of the exocyst complex and to localize functional exocyst complexes to the leading edge of migrating cells (By similarity). Required for suppression of apoptosis (By similarity). In late stages of cytokinesis, upon completion of the bridge formation between dividing cells, mediates exocyst recruitment to the midbody to drive abscission (By similarity). Involved in ligand-dependent receptor mediated endocytosis of the EGF and insulin receptors (By similarity).</text>
</comment>
<comment type="catalytic activity">
    <reaction evidence="5">
        <text>GTP + H2O = GDP + phosphate + H(+)</text>
        <dbReference type="Rhea" id="RHEA:19669"/>
        <dbReference type="ChEBI" id="CHEBI:15377"/>
        <dbReference type="ChEBI" id="CHEBI:15378"/>
        <dbReference type="ChEBI" id="CHEBI:37565"/>
        <dbReference type="ChEBI" id="CHEBI:43474"/>
        <dbReference type="ChEBI" id="CHEBI:58189"/>
        <dbReference type="EC" id="3.6.5.2"/>
    </reaction>
</comment>
<comment type="activity regulation">
    <text>Alternates between an inactive form bound to GDP and an active form bound to GTP. Activated by a guanine nucleotide-exchange factor (GEF) and inactivated by a GTPase-activating protein (GAP).</text>
</comment>
<comment type="subunit">
    <text evidence="2">Interacts with EXOC2/Sec5 and EXOC8/Exo84. Interacts (via effector domain) with RALBP1.</text>
</comment>
<comment type="subcellular location">
    <subcellularLocation>
        <location evidence="2">Cell membrane</location>
        <topology evidence="2">Lipid-anchor</topology>
        <orientation evidence="2">Cytoplasmic side</orientation>
    </subcellularLocation>
    <subcellularLocation>
        <location evidence="2">Midbody</location>
    </subcellularLocation>
    <text evidence="2">During late cytokinesis, enriched at the midbody.</text>
</comment>
<comment type="PTM">
    <text evidence="2">Prenylation is essential for membrane localization.</text>
</comment>
<comment type="PTM">
    <text evidence="2">The farnesylated form confers resistance to the proapoptotic and anti-anchorage-dependent growth effects of some geranylgeranyltransferase I inhibitors.</text>
</comment>
<comment type="similarity">
    <text evidence="5">Belongs to the small GTPase superfamily. Ras family.</text>
</comment>
<evidence type="ECO:0000250" key="1"/>
<evidence type="ECO:0000250" key="2">
    <source>
        <dbReference type="UniProtKB" id="P11234"/>
    </source>
</evidence>
<evidence type="ECO:0000250" key="3">
    <source>
        <dbReference type="UniProtKB" id="P36860"/>
    </source>
</evidence>
<evidence type="ECO:0000256" key="4">
    <source>
        <dbReference type="SAM" id="MobiDB-lite"/>
    </source>
</evidence>
<evidence type="ECO:0000305" key="5"/>
<organism>
    <name type="scientific">Macaca fascicularis</name>
    <name type="common">Crab-eating macaque</name>
    <name type="synonym">Cynomolgus monkey</name>
    <dbReference type="NCBI Taxonomy" id="9541"/>
    <lineage>
        <taxon>Eukaryota</taxon>
        <taxon>Metazoa</taxon>
        <taxon>Chordata</taxon>
        <taxon>Craniata</taxon>
        <taxon>Vertebrata</taxon>
        <taxon>Euteleostomi</taxon>
        <taxon>Mammalia</taxon>
        <taxon>Eutheria</taxon>
        <taxon>Euarchontoglires</taxon>
        <taxon>Primates</taxon>
        <taxon>Haplorrhini</taxon>
        <taxon>Catarrhini</taxon>
        <taxon>Cercopithecidae</taxon>
        <taxon>Cercopithecinae</taxon>
        <taxon>Macaca</taxon>
    </lineage>
</organism>
<accession>Q4R379</accession>
<protein>
    <recommendedName>
        <fullName>Ras-related protein Ral-B</fullName>
        <ecNumber evidence="5">3.6.5.2</ecNumber>
    </recommendedName>
</protein>
<dbReference type="EC" id="3.6.5.2" evidence="5"/>
<dbReference type="EMBL" id="AB179387">
    <property type="protein sequence ID" value="BAE02438.1"/>
    <property type="molecule type" value="mRNA"/>
</dbReference>
<dbReference type="RefSeq" id="NP_001306496.1">
    <property type="nucleotide sequence ID" value="NM_001319567.1"/>
</dbReference>
<dbReference type="RefSeq" id="XP_005572982.2">
    <property type="nucleotide sequence ID" value="XM_005572925.4"/>
</dbReference>
<dbReference type="RefSeq" id="XP_005572983.1">
    <property type="nucleotide sequence ID" value="XM_005572926.4"/>
</dbReference>
<dbReference type="RefSeq" id="XP_015287459.1">
    <property type="nucleotide sequence ID" value="XM_015431973.3"/>
</dbReference>
<dbReference type="RefSeq" id="XP_045222882.1">
    <property type="nucleotide sequence ID" value="XM_045366947.2"/>
</dbReference>
<dbReference type="RefSeq" id="XP_045222883.1">
    <property type="nucleotide sequence ID" value="XM_045366948.2"/>
</dbReference>
<dbReference type="RefSeq" id="XP_045222884.1">
    <property type="nucleotide sequence ID" value="XM_045366949.2"/>
</dbReference>
<dbReference type="RefSeq" id="XP_065381443.1">
    <property type="nucleotide sequence ID" value="XM_065525371.1"/>
</dbReference>
<dbReference type="BMRB" id="Q4R379"/>
<dbReference type="SMR" id="Q4R379"/>
<dbReference type="IntAct" id="Q4R379">
    <property type="interactions" value="1"/>
</dbReference>
<dbReference type="STRING" id="9541.ENSMFAP00000038350"/>
<dbReference type="GeneID" id="101925782"/>
<dbReference type="CTD" id="5899"/>
<dbReference type="VEuPathDB" id="HostDB:ENSMFAG00000038532"/>
<dbReference type="eggNOG" id="KOG0395">
    <property type="taxonomic scope" value="Eukaryota"/>
</dbReference>
<dbReference type="Proteomes" id="UP000233100">
    <property type="component" value="Chromosome 12"/>
</dbReference>
<dbReference type="GO" id="GO:0030496">
    <property type="term" value="C:midbody"/>
    <property type="evidence" value="ECO:0000250"/>
    <property type="project" value="UniProtKB"/>
</dbReference>
<dbReference type="GO" id="GO:0005886">
    <property type="term" value="C:plasma membrane"/>
    <property type="evidence" value="ECO:0000250"/>
    <property type="project" value="UniProtKB"/>
</dbReference>
<dbReference type="GO" id="GO:0003925">
    <property type="term" value="F:G protein activity"/>
    <property type="evidence" value="ECO:0007669"/>
    <property type="project" value="UniProtKB-EC"/>
</dbReference>
<dbReference type="GO" id="GO:0005525">
    <property type="term" value="F:GTP binding"/>
    <property type="evidence" value="ECO:0000250"/>
    <property type="project" value="UniProtKB"/>
</dbReference>
<dbReference type="GO" id="GO:0003924">
    <property type="term" value="F:GTPase activity"/>
    <property type="evidence" value="ECO:0000250"/>
    <property type="project" value="UniProtKB"/>
</dbReference>
<dbReference type="GO" id="GO:0006915">
    <property type="term" value="P:apoptotic process"/>
    <property type="evidence" value="ECO:0007669"/>
    <property type="project" value="UniProtKB-KW"/>
</dbReference>
<dbReference type="GO" id="GO:0051301">
    <property type="term" value="P:cell division"/>
    <property type="evidence" value="ECO:0007669"/>
    <property type="project" value="UniProtKB-KW"/>
</dbReference>
<dbReference type="GO" id="GO:0001928">
    <property type="term" value="P:regulation of exocyst assembly"/>
    <property type="evidence" value="ECO:0000250"/>
    <property type="project" value="UniProtKB"/>
</dbReference>
<dbReference type="GO" id="GO:0060178">
    <property type="term" value="P:regulation of exocyst localization"/>
    <property type="evidence" value="ECO:0000250"/>
    <property type="project" value="UniProtKB"/>
</dbReference>
<dbReference type="GO" id="GO:0007165">
    <property type="term" value="P:signal transduction"/>
    <property type="evidence" value="ECO:0007669"/>
    <property type="project" value="InterPro"/>
</dbReference>
<dbReference type="CDD" id="cd04139">
    <property type="entry name" value="RalA_RalB"/>
    <property type="match status" value="1"/>
</dbReference>
<dbReference type="FunFam" id="3.40.50.300:FF:000203">
    <property type="entry name" value="Putative ras-related protein ral-a"/>
    <property type="match status" value="1"/>
</dbReference>
<dbReference type="Gene3D" id="3.40.50.300">
    <property type="entry name" value="P-loop containing nucleotide triphosphate hydrolases"/>
    <property type="match status" value="1"/>
</dbReference>
<dbReference type="InterPro" id="IPR027417">
    <property type="entry name" value="P-loop_NTPase"/>
</dbReference>
<dbReference type="InterPro" id="IPR005225">
    <property type="entry name" value="Small_GTP-bd"/>
</dbReference>
<dbReference type="InterPro" id="IPR001806">
    <property type="entry name" value="Small_GTPase"/>
</dbReference>
<dbReference type="InterPro" id="IPR020849">
    <property type="entry name" value="Small_GTPase_Ras-type"/>
</dbReference>
<dbReference type="NCBIfam" id="TIGR00231">
    <property type="entry name" value="small_GTP"/>
    <property type="match status" value="1"/>
</dbReference>
<dbReference type="PANTHER" id="PTHR24070">
    <property type="entry name" value="RAS, DI-RAS, AND RHEB FAMILY MEMBERS OF SMALL GTPASE SUPERFAMILY"/>
    <property type="match status" value="1"/>
</dbReference>
<dbReference type="Pfam" id="PF00071">
    <property type="entry name" value="Ras"/>
    <property type="match status" value="1"/>
</dbReference>
<dbReference type="PRINTS" id="PR00449">
    <property type="entry name" value="RASTRNSFRMNG"/>
</dbReference>
<dbReference type="SMART" id="SM00175">
    <property type="entry name" value="RAB"/>
    <property type="match status" value="1"/>
</dbReference>
<dbReference type="SMART" id="SM00176">
    <property type="entry name" value="RAN"/>
    <property type="match status" value="1"/>
</dbReference>
<dbReference type="SMART" id="SM00173">
    <property type="entry name" value="RAS"/>
    <property type="match status" value="1"/>
</dbReference>
<dbReference type="SMART" id="SM00174">
    <property type="entry name" value="RHO"/>
    <property type="match status" value="1"/>
</dbReference>
<dbReference type="SUPFAM" id="SSF52540">
    <property type="entry name" value="P-loop containing nucleoside triphosphate hydrolases"/>
    <property type="match status" value="1"/>
</dbReference>
<dbReference type="PROSITE" id="PS51421">
    <property type="entry name" value="RAS"/>
    <property type="match status" value="1"/>
</dbReference>
<gene>
    <name type="primary">RALB</name>
    <name type="ORF">QtsA-18830</name>
</gene>
<feature type="chain" id="PRO_0000260755" description="Ras-related protein Ral-B">
    <location>
        <begin position="1"/>
        <end position="203"/>
    </location>
</feature>
<feature type="propeptide" id="PRO_0000281350" description="Removed in mature form" evidence="1">
    <location>
        <begin position="204"/>
        <end position="206"/>
    </location>
</feature>
<feature type="region of interest" description="Disordered" evidence="4">
    <location>
        <begin position="180"/>
        <end position="206"/>
    </location>
</feature>
<feature type="short sequence motif" description="Effector region">
    <location>
        <begin position="43"/>
        <end position="51"/>
    </location>
</feature>
<feature type="compositionally biased region" description="Basic and acidic residues" evidence="4">
    <location>
        <begin position="180"/>
        <end position="189"/>
    </location>
</feature>
<feature type="binding site" evidence="1">
    <location>
        <begin position="21"/>
        <end position="29"/>
    </location>
    <ligand>
        <name>GTP</name>
        <dbReference type="ChEBI" id="CHEBI:37565"/>
    </ligand>
</feature>
<feature type="binding site" evidence="1">
    <location>
        <begin position="68"/>
        <end position="72"/>
    </location>
    <ligand>
        <name>GTP</name>
        <dbReference type="ChEBI" id="CHEBI:37565"/>
    </ligand>
</feature>
<feature type="binding site" evidence="1">
    <location>
        <begin position="128"/>
        <end position="131"/>
    </location>
    <ligand>
        <name>GTP</name>
        <dbReference type="ChEBI" id="CHEBI:37565"/>
    </ligand>
</feature>
<feature type="binding site" evidence="1">
    <location>
        <begin position="158"/>
        <end position="160"/>
    </location>
    <ligand>
        <name>GTP</name>
        <dbReference type="ChEBI" id="CHEBI:37565"/>
    </ligand>
</feature>
<feature type="modified residue" description="Cysteine methyl ester" evidence="1">
    <location>
        <position position="203"/>
    </location>
</feature>
<feature type="lipid moiety-binding region" description="S-geranylgeranyl cysteine" evidence="1">
    <location>
        <position position="203"/>
    </location>
</feature>
<sequence>MAANKSKGQSSLALHKVIMVGSGGVGKSALTLQFMYDEFVEDYEPTKADSYRKKVVLDGEEVQIDILDTAGQEDYAAIRDNYFRSGEGFLLVFSITEHESFTATAEFREQILRVKAEEDKIPLLVVGNKSDLEERRQVPVEEARSKAEEWGVQYVETSAKTRANVDKVFFDLMREIRTKKMSENKDKNGKKSGKNKKSFKERCCLL</sequence>